<name>MURC_LACLS</name>
<gene>
    <name evidence="1" type="primary">murC</name>
    <name type="ordered locus">LACR_2326</name>
</gene>
<keyword id="KW-0067">ATP-binding</keyword>
<keyword id="KW-0131">Cell cycle</keyword>
<keyword id="KW-0132">Cell division</keyword>
<keyword id="KW-0133">Cell shape</keyword>
<keyword id="KW-0961">Cell wall biogenesis/degradation</keyword>
<keyword id="KW-0963">Cytoplasm</keyword>
<keyword id="KW-0436">Ligase</keyword>
<keyword id="KW-0547">Nucleotide-binding</keyword>
<keyword id="KW-0573">Peptidoglycan synthesis</keyword>
<reference key="1">
    <citation type="journal article" date="2006" name="Proc. Natl. Acad. Sci. U.S.A.">
        <title>Comparative genomics of the lactic acid bacteria.</title>
        <authorList>
            <person name="Makarova K.S."/>
            <person name="Slesarev A."/>
            <person name="Wolf Y.I."/>
            <person name="Sorokin A."/>
            <person name="Mirkin B."/>
            <person name="Koonin E.V."/>
            <person name="Pavlov A."/>
            <person name="Pavlova N."/>
            <person name="Karamychev V."/>
            <person name="Polouchine N."/>
            <person name="Shakhova V."/>
            <person name="Grigoriev I."/>
            <person name="Lou Y."/>
            <person name="Rohksar D."/>
            <person name="Lucas S."/>
            <person name="Huang K."/>
            <person name="Goodstein D.M."/>
            <person name="Hawkins T."/>
            <person name="Plengvidhya V."/>
            <person name="Welker D."/>
            <person name="Hughes J."/>
            <person name="Goh Y."/>
            <person name="Benson A."/>
            <person name="Baldwin K."/>
            <person name="Lee J.-H."/>
            <person name="Diaz-Muniz I."/>
            <person name="Dosti B."/>
            <person name="Smeianov V."/>
            <person name="Wechter W."/>
            <person name="Barabote R."/>
            <person name="Lorca G."/>
            <person name="Altermann E."/>
            <person name="Barrangou R."/>
            <person name="Ganesan B."/>
            <person name="Xie Y."/>
            <person name="Rawsthorne H."/>
            <person name="Tamir D."/>
            <person name="Parker C."/>
            <person name="Breidt F."/>
            <person name="Broadbent J.R."/>
            <person name="Hutkins R."/>
            <person name="O'Sullivan D."/>
            <person name="Steele J."/>
            <person name="Unlu G."/>
            <person name="Saier M.H. Jr."/>
            <person name="Klaenhammer T."/>
            <person name="Richardson P."/>
            <person name="Kozyavkin S."/>
            <person name="Weimer B.C."/>
            <person name="Mills D.A."/>
        </authorList>
    </citation>
    <scope>NUCLEOTIDE SEQUENCE [LARGE SCALE GENOMIC DNA]</scope>
    <source>
        <strain>SK11</strain>
    </source>
</reference>
<proteinExistence type="inferred from homology"/>
<protein>
    <recommendedName>
        <fullName evidence="1">UDP-N-acetylmuramate--L-alanine ligase</fullName>
        <ecNumber evidence="1">6.3.2.8</ecNumber>
    </recommendedName>
    <alternativeName>
        <fullName evidence="1">UDP-N-acetylmuramoyl-L-alanine synthetase</fullName>
    </alternativeName>
</protein>
<organism>
    <name type="scientific">Lactococcus lactis subsp. cremoris (strain SK11)</name>
    <dbReference type="NCBI Taxonomy" id="272622"/>
    <lineage>
        <taxon>Bacteria</taxon>
        <taxon>Bacillati</taxon>
        <taxon>Bacillota</taxon>
        <taxon>Bacilli</taxon>
        <taxon>Lactobacillales</taxon>
        <taxon>Streptococcaceae</taxon>
        <taxon>Lactococcus</taxon>
        <taxon>Lactococcus cremoris subsp. cremoris</taxon>
    </lineage>
</organism>
<comment type="function">
    <text evidence="1">Cell wall formation.</text>
</comment>
<comment type="catalytic activity">
    <reaction evidence="1">
        <text>UDP-N-acetyl-alpha-D-muramate + L-alanine + ATP = UDP-N-acetyl-alpha-D-muramoyl-L-alanine + ADP + phosphate + H(+)</text>
        <dbReference type="Rhea" id="RHEA:23372"/>
        <dbReference type="ChEBI" id="CHEBI:15378"/>
        <dbReference type="ChEBI" id="CHEBI:30616"/>
        <dbReference type="ChEBI" id="CHEBI:43474"/>
        <dbReference type="ChEBI" id="CHEBI:57972"/>
        <dbReference type="ChEBI" id="CHEBI:70757"/>
        <dbReference type="ChEBI" id="CHEBI:83898"/>
        <dbReference type="ChEBI" id="CHEBI:456216"/>
        <dbReference type="EC" id="6.3.2.8"/>
    </reaction>
</comment>
<comment type="pathway">
    <text evidence="1">Cell wall biogenesis; peptidoglycan biosynthesis.</text>
</comment>
<comment type="subcellular location">
    <subcellularLocation>
        <location evidence="1">Cytoplasm</location>
    </subcellularLocation>
</comment>
<comment type="similarity">
    <text evidence="1">Belongs to the MurCDEF family.</text>
</comment>
<dbReference type="EC" id="6.3.2.8" evidence="1"/>
<dbReference type="EMBL" id="CP000425">
    <property type="protein sequence ID" value="ABJ73780.1"/>
    <property type="molecule type" value="Genomic_DNA"/>
</dbReference>
<dbReference type="RefSeq" id="WP_011677111.1">
    <property type="nucleotide sequence ID" value="NC_008527.1"/>
</dbReference>
<dbReference type="SMR" id="Q02W92"/>
<dbReference type="KEGG" id="llc:LACR_2326"/>
<dbReference type="HOGENOM" id="CLU_028104_1_0_9"/>
<dbReference type="UniPathway" id="UPA00219"/>
<dbReference type="Proteomes" id="UP000000240">
    <property type="component" value="Chromosome"/>
</dbReference>
<dbReference type="GO" id="GO:0005737">
    <property type="term" value="C:cytoplasm"/>
    <property type="evidence" value="ECO:0007669"/>
    <property type="project" value="UniProtKB-SubCell"/>
</dbReference>
<dbReference type="GO" id="GO:0005524">
    <property type="term" value="F:ATP binding"/>
    <property type="evidence" value="ECO:0007669"/>
    <property type="project" value="UniProtKB-UniRule"/>
</dbReference>
<dbReference type="GO" id="GO:0008763">
    <property type="term" value="F:UDP-N-acetylmuramate-L-alanine ligase activity"/>
    <property type="evidence" value="ECO:0007669"/>
    <property type="project" value="UniProtKB-UniRule"/>
</dbReference>
<dbReference type="GO" id="GO:0051301">
    <property type="term" value="P:cell division"/>
    <property type="evidence" value="ECO:0007669"/>
    <property type="project" value="UniProtKB-KW"/>
</dbReference>
<dbReference type="GO" id="GO:0071555">
    <property type="term" value="P:cell wall organization"/>
    <property type="evidence" value="ECO:0007669"/>
    <property type="project" value="UniProtKB-KW"/>
</dbReference>
<dbReference type="GO" id="GO:0009252">
    <property type="term" value="P:peptidoglycan biosynthetic process"/>
    <property type="evidence" value="ECO:0007669"/>
    <property type="project" value="UniProtKB-UniRule"/>
</dbReference>
<dbReference type="GO" id="GO:0008360">
    <property type="term" value="P:regulation of cell shape"/>
    <property type="evidence" value="ECO:0007669"/>
    <property type="project" value="UniProtKB-KW"/>
</dbReference>
<dbReference type="Gene3D" id="3.90.190.20">
    <property type="entry name" value="Mur ligase, C-terminal domain"/>
    <property type="match status" value="1"/>
</dbReference>
<dbReference type="Gene3D" id="3.40.1190.10">
    <property type="entry name" value="Mur-like, catalytic domain"/>
    <property type="match status" value="1"/>
</dbReference>
<dbReference type="Gene3D" id="3.40.50.720">
    <property type="entry name" value="NAD(P)-binding Rossmann-like Domain"/>
    <property type="match status" value="1"/>
</dbReference>
<dbReference type="HAMAP" id="MF_00046">
    <property type="entry name" value="MurC"/>
    <property type="match status" value="1"/>
</dbReference>
<dbReference type="InterPro" id="IPR036565">
    <property type="entry name" value="Mur-like_cat_sf"/>
</dbReference>
<dbReference type="InterPro" id="IPR004101">
    <property type="entry name" value="Mur_ligase_C"/>
</dbReference>
<dbReference type="InterPro" id="IPR036615">
    <property type="entry name" value="Mur_ligase_C_dom_sf"/>
</dbReference>
<dbReference type="InterPro" id="IPR013221">
    <property type="entry name" value="Mur_ligase_cen"/>
</dbReference>
<dbReference type="InterPro" id="IPR000713">
    <property type="entry name" value="Mur_ligase_N"/>
</dbReference>
<dbReference type="InterPro" id="IPR050061">
    <property type="entry name" value="MurCDEF_pg_biosynth"/>
</dbReference>
<dbReference type="InterPro" id="IPR005758">
    <property type="entry name" value="UDP-N-AcMur_Ala_ligase_MurC"/>
</dbReference>
<dbReference type="NCBIfam" id="TIGR01082">
    <property type="entry name" value="murC"/>
    <property type="match status" value="1"/>
</dbReference>
<dbReference type="PANTHER" id="PTHR43445:SF3">
    <property type="entry name" value="UDP-N-ACETYLMURAMATE--L-ALANINE LIGASE"/>
    <property type="match status" value="1"/>
</dbReference>
<dbReference type="PANTHER" id="PTHR43445">
    <property type="entry name" value="UDP-N-ACETYLMURAMATE--L-ALANINE LIGASE-RELATED"/>
    <property type="match status" value="1"/>
</dbReference>
<dbReference type="Pfam" id="PF01225">
    <property type="entry name" value="Mur_ligase"/>
    <property type="match status" value="1"/>
</dbReference>
<dbReference type="Pfam" id="PF02875">
    <property type="entry name" value="Mur_ligase_C"/>
    <property type="match status" value="1"/>
</dbReference>
<dbReference type="Pfam" id="PF08245">
    <property type="entry name" value="Mur_ligase_M"/>
    <property type="match status" value="1"/>
</dbReference>
<dbReference type="SUPFAM" id="SSF51984">
    <property type="entry name" value="MurCD N-terminal domain"/>
    <property type="match status" value="1"/>
</dbReference>
<dbReference type="SUPFAM" id="SSF53623">
    <property type="entry name" value="MurD-like peptide ligases, catalytic domain"/>
    <property type="match status" value="1"/>
</dbReference>
<dbReference type="SUPFAM" id="SSF53244">
    <property type="entry name" value="MurD-like peptide ligases, peptide-binding domain"/>
    <property type="match status" value="1"/>
</dbReference>
<accession>Q02W92</accession>
<sequence>MEKTYHFTGIKGSGMSALALMLHQMGKNVQGSDSTDYFFTQRGLEQVGVPLLPFDEKNIKPEFELIIGNAFRDDNNVEIAFAHKNGFPFKRYHEFLGHFMEDFTSIGVAGAHGKTSTTGMLAHVMSNIVDTSYLIGDGTGRGNAGSEYFVFESDEYERHFMPYHPEYTIMTNIDFDHPDYFEGIEDVTSAFQDYANNIKKGIFAYGEDVNLRKLSAKAPIYYYGFEANDDYRAENLIRNTRGSSFDAYFRGEKIGHFVVPAYGKHNVLNALSVVAVCHNLGLDMTDVADHLLTFRGVKRRFTEKKVGETVIIDDFAHHPTEIEATLDAARQKYPDREIVAVFQPHTFTRTIAFADEFAEVLDHADTVYLAQIYGSAREVDHHEITAQDLADKVRKPAKVIELDNVSPLLDHDRGVYVFMGAGNIQKYEIAFEKLLSQTSTNLQ</sequence>
<feature type="chain" id="PRO_1000004360" description="UDP-N-acetylmuramate--L-alanine ligase">
    <location>
        <begin position="1"/>
        <end position="443"/>
    </location>
</feature>
<feature type="binding site" evidence="1">
    <location>
        <begin position="110"/>
        <end position="116"/>
    </location>
    <ligand>
        <name>ATP</name>
        <dbReference type="ChEBI" id="CHEBI:30616"/>
    </ligand>
</feature>
<evidence type="ECO:0000255" key="1">
    <source>
        <dbReference type="HAMAP-Rule" id="MF_00046"/>
    </source>
</evidence>